<dbReference type="PIR" id="S66610">
    <property type="entry name" value="S66610"/>
</dbReference>
<dbReference type="GO" id="GO:0005576">
    <property type="term" value="C:extracellular region"/>
    <property type="evidence" value="ECO:0007669"/>
    <property type="project" value="UniProtKB-SubCell"/>
</dbReference>
<dbReference type="GO" id="GO:0007218">
    <property type="term" value="P:neuropeptide signaling pathway"/>
    <property type="evidence" value="ECO:0007669"/>
    <property type="project" value="UniProtKB-KW"/>
</dbReference>
<dbReference type="InterPro" id="IPR013152">
    <property type="entry name" value="Gastrin/cholecystokinin_CS"/>
</dbReference>
<dbReference type="InterPro" id="IPR013259">
    <property type="entry name" value="Sulfakinin"/>
</dbReference>
<dbReference type="Pfam" id="PF08257">
    <property type="entry name" value="Sulfakinin"/>
    <property type="match status" value="2"/>
</dbReference>
<dbReference type="PROSITE" id="PS00259">
    <property type="entry name" value="GASTRIN"/>
    <property type="match status" value="2"/>
</dbReference>
<protein>
    <recommendedName>
        <fullName>Callisulfakinin</fullName>
    </recommendedName>
    <component>
        <recommendedName>
            <fullName>Callisulfakinin-1</fullName>
        </recommendedName>
        <alternativeName>
            <fullName>Callisulfakinin I</fullName>
        </alternativeName>
    </component>
    <component>
        <recommendedName>
            <fullName>Callisulfakinin-2</fullName>
        </recommendedName>
        <alternativeName>
            <fullName>Callisulfakinin II</fullName>
        </alternativeName>
    </component>
</protein>
<comment type="function">
    <text>Callisulfakinin I is a neuropeptide. The existence of Callisulfakinin II is uncertain.</text>
</comment>
<comment type="subcellular location">
    <subcellularLocation>
        <location>Secreted</location>
    </subcellularLocation>
</comment>
<comment type="tissue specificity">
    <text evidence="2">In brain, it is specifically expressed in four pairs of neurons. Not expressed in other cells of the brain and in the thoracico-abdominal ganglion.</text>
</comment>
<comment type="similarity">
    <text evidence="3">Belongs to the gastrin/cholecystokinin family.</text>
</comment>
<evidence type="ECO:0000255" key="1"/>
<evidence type="ECO:0000269" key="2">
    <source>
    </source>
</evidence>
<evidence type="ECO:0000305" key="3"/>
<sequence>MYSQQRIFNSKYFIFFIAVLSIFWLPTMSARNLENSKNENGISGSNSGNGKMNSQYNTGSPSAYYSAKHNLRSMLMAPKDYQQKLHAKIPLNLDLMDFLLEYEDEDRSKRFDDYGHMRFGKRGGEEQFDDYGHMRFGRSI</sequence>
<name>CSK_CALVO</name>
<reference key="1">
    <citation type="journal article" date="1995" name="Eur. J. Biochem.">
        <title>The sulfakinins of the blowfly Calliphora vomitoria. Peptide isolation, gene cloning and expression studies.</title>
        <authorList>
            <person name="Duve H."/>
            <person name="Thorpe A."/>
            <person name="Scott A.G."/>
            <person name="Johnsen A.H."/>
            <person name="Rehfeld J.F."/>
            <person name="Hines E."/>
            <person name="East P.D."/>
        </authorList>
    </citation>
    <scope>NUCLEOTIDE SEQUENCE</scope>
    <scope>PROTEIN SEQUENCE OF 111-119</scope>
    <scope>SULFATION AT TYR-114 AND TYR-131</scope>
    <scope>AMIDATION AT PHE-119 AND PHE-136</scope>
    <scope>TISSUE SPECIFICITY</scope>
    <source>
        <tissue>Head</tissue>
    </source>
</reference>
<accession>Q7M3V5</accession>
<feature type="signal peptide" evidence="1">
    <location>
        <begin position="1"/>
        <end position="30"/>
    </location>
</feature>
<feature type="propeptide" id="PRO_0000010662">
    <location>
        <begin position="31"/>
        <end position="109"/>
    </location>
</feature>
<feature type="peptide" id="PRO_0000010663" description="Callisulfakinin-1">
    <location>
        <begin position="111"/>
        <end position="119"/>
    </location>
</feature>
<feature type="peptide" id="PRO_0000010664" description="Callisulfakinin-2" evidence="1">
    <location>
        <begin position="123"/>
        <end position="136"/>
    </location>
</feature>
<feature type="propeptide" id="PRO_0000010665" evidence="1">
    <location>
        <begin position="139"/>
        <end position="140"/>
    </location>
</feature>
<feature type="modified residue" description="Sulfotyrosine" evidence="2">
    <location>
        <position position="114"/>
    </location>
</feature>
<feature type="modified residue" description="Phenylalanine amide" evidence="2">
    <location>
        <position position="119"/>
    </location>
</feature>
<feature type="modified residue" description="Sulfotyrosine" evidence="2">
    <location>
        <position position="131"/>
    </location>
</feature>
<feature type="modified residue" description="Phenylalanine amide" evidence="2">
    <location>
        <position position="136"/>
    </location>
</feature>
<keyword id="KW-0027">Amidation</keyword>
<keyword id="KW-0165">Cleavage on pair of basic residues</keyword>
<keyword id="KW-0903">Direct protein sequencing</keyword>
<keyword id="KW-0527">Neuropeptide</keyword>
<keyword id="KW-0964">Secreted</keyword>
<keyword id="KW-0732">Signal</keyword>
<keyword id="KW-0765">Sulfation</keyword>
<proteinExistence type="evidence at protein level"/>
<organism>
    <name type="scientific">Calliphora vomitoria</name>
    <name type="common">Blue bottle fly</name>
    <name type="synonym">Musca vomitoria</name>
    <dbReference type="NCBI Taxonomy" id="27454"/>
    <lineage>
        <taxon>Eukaryota</taxon>
        <taxon>Metazoa</taxon>
        <taxon>Ecdysozoa</taxon>
        <taxon>Arthropoda</taxon>
        <taxon>Hexapoda</taxon>
        <taxon>Insecta</taxon>
        <taxon>Pterygota</taxon>
        <taxon>Neoptera</taxon>
        <taxon>Endopterygota</taxon>
        <taxon>Diptera</taxon>
        <taxon>Brachycera</taxon>
        <taxon>Muscomorpha</taxon>
        <taxon>Oestroidea</taxon>
        <taxon>Calliphoridae</taxon>
        <taxon>Calliphorinae</taxon>
        <taxon>Calliphora</taxon>
    </lineage>
</organism>